<reference key="1">
    <citation type="submission" date="2006-12" db="EMBL/GenBank/DDBJ databases">
        <title>Complete sequence of Shewanella amazonensis SB2B.</title>
        <authorList>
            <consortium name="US DOE Joint Genome Institute"/>
            <person name="Copeland A."/>
            <person name="Lucas S."/>
            <person name="Lapidus A."/>
            <person name="Barry K."/>
            <person name="Detter J.C."/>
            <person name="Glavina del Rio T."/>
            <person name="Hammon N."/>
            <person name="Israni S."/>
            <person name="Dalin E."/>
            <person name="Tice H."/>
            <person name="Pitluck S."/>
            <person name="Munk A.C."/>
            <person name="Brettin T."/>
            <person name="Bruce D."/>
            <person name="Han C."/>
            <person name="Tapia R."/>
            <person name="Gilna P."/>
            <person name="Schmutz J."/>
            <person name="Larimer F."/>
            <person name="Land M."/>
            <person name="Hauser L."/>
            <person name="Kyrpides N."/>
            <person name="Mikhailova N."/>
            <person name="Fredrickson J."/>
            <person name="Richardson P."/>
        </authorList>
    </citation>
    <scope>NUCLEOTIDE SEQUENCE [LARGE SCALE GENOMIC DNA]</scope>
    <source>
        <strain>ATCC BAA-1098 / SB2B</strain>
    </source>
</reference>
<dbReference type="EC" id="2.5.1.6" evidence="1"/>
<dbReference type="EMBL" id="CP000507">
    <property type="protein sequence ID" value="ABM00963.1"/>
    <property type="molecule type" value="Genomic_DNA"/>
</dbReference>
<dbReference type="RefSeq" id="WP_011760868.1">
    <property type="nucleotide sequence ID" value="NC_008700.1"/>
</dbReference>
<dbReference type="SMR" id="A1S9A6"/>
<dbReference type="STRING" id="326297.Sama_2760"/>
<dbReference type="KEGG" id="saz:Sama_2760"/>
<dbReference type="eggNOG" id="COG0192">
    <property type="taxonomic scope" value="Bacteria"/>
</dbReference>
<dbReference type="HOGENOM" id="CLU_041802_1_1_6"/>
<dbReference type="OrthoDB" id="9801686at2"/>
<dbReference type="UniPathway" id="UPA00315">
    <property type="reaction ID" value="UER00080"/>
</dbReference>
<dbReference type="Proteomes" id="UP000009175">
    <property type="component" value="Chromosome"/>
</dbReference>
<dbReference type="GO" id="GO:0005737">
    <property type="term" value="C:cytoplasm"/>
    <property type="evidence" value="ECO:0007669"/>
    <property type="project" value="UniProtKB-SubCell"/>
</dbReference>
<dbReference type="GO" id="GO:0005524">
    <property type="term" value="F:ATP binding"/>
    <property type="evidence" value="ECO:0007669"/>
    <property type="project" value="UniProtKB-UniRule"/>
</dbReference>
<dbReference type="GO" id="GO:0000287">
    <property type="term" value="F:magnesium ion binding"/>
    <property type="evidence" value="ECO:0007669"/>
    <property type="project" value="UniProtKB-UniRule"/>
</dbReference>
<dbReference type="GO" id="GO:0004478">
    <property type="term" value="F:methionine adenosyltransferase activity"/>
    <property type="evidence" value="ECO:0007669"/>
    <property type="project" value="UniProtKB-UniRule"/>
</dbReference>
<dbReference type="GO" id="GO:0006730">
    <property type="term" value="P:one-carbon metabolic process"/>
    <property type="evidence" value="ECO:0007669"/>
    <property type="project" value="UniProtKB-KW"/>
</dbReference>
<dbReference type="GO" id="GO:0006556">
    <property type="term" value="P:S-adenosylmethionine biosynthetic process"/>
    <property type="evidence" value="ECO:0007669"/>
    <property type="project" value="UniProtKB-UniRule"/>
</dbReference>
<dbReference type="CDD" id="cd18079">
    <property type="entry name" value="S-AdoMet_synt"/>
    <property type="match status" value="1"/>
</dbReference>
<dbReference type="FunFam" id="3.30.300.10:FF:000001">
    <property type="entry name" value="S-adenosylmethionine synthase"/>
    <property type="match status" value="1"/>
</dbReference>
<dbReference type="FunFam" id="3.30.300.10:FF:000003">
    <property type="entry name" value="S-adenosylmethionine synthase"/>
    <property type="match status" value="1"/>
</dbReference>
<dbReference type="FunFam" id="3.30.300.10:FF:000004">
    <property type="entry name" value="S-adenosylmethionine synthase"/>
    <property type="match status" value="1"/>
</dbReference>
<dbReference type="Gene3D" id="3.30.300.10">
    <property type="match status" value="3"/>
</dbReference>
<dbReference type="HAMAP" id="MF_00086">
    <property type="entry name" value="S_AdoMet_synth1"/>
    <property type="match status" value="1"/>
</dbReference>
<dbReference type="InterPro" id="IPR022631">
    <property type="entry name" value="ADOMET_SYNTHASE_CS"/>
</dbReference>
<dbReference type="InterPro" id="IPR022630">
    <property type="entry name" value="S-AdoMet_synt_C"/>
</dbReference>
<dbReference type="InterPro" id="IPR022629">
    <property type="entry name" value="S-AdoMet_synt_central"/>
</dbReference>
<dbReference type="InterPro" id="IPR022628">
    <property type="entry name" value="S-AdoMet_synt_N"/>
</dbReference>
<dbReference type="InterPro" id="IPR002133">
    <property type="entry name" value="S-AdoMet_synthetase"/>
</dbReference>
<dbReference type="InterPro" id="IPR022636">
    <property type="entry name" value="S-AdoMet_synthetase_sfam"/>
</dbReference>
<dbReference type="NCBIfam" id="TIGR01034">
    <property type="entry name" value="metK"/>
    <property type="match status" value="1"/>
</dbReference>
<dbReference type="PANTHER" id="PTHR11964">
    <property type="entry name" value="S-ADENOSYLMETHIONINE SYNTHETASE"/>
    <property type="match status" value="1"/>
</dbReference>
<dbReference type="Pfam" id="PF02773">
    <property type="entry name" value="S-AdoMet_synt_C"/>
    <property type="match status" value="1"/>
</dbReference>
<dbReference type="Pfam" id="PF02772">
    <property type="entry name" value="S-AdoMet_synt_M"/>
    <property type="match status" value="1"/>
</dbReference>
<dbReference type="Pfam" id="PF00438">
    <property type="entry name" value="S-AdoMet_synt_N"/>
    <property type="match status" value="1"/>
</dbReference>
<dbReference type="PIRSF" id="PIRSF000497">
    <property type="entry name" value="MAT"/>
    <property type="match status" value="1"/>
</dbReference>
<dbReference type="SUPFAM" id="SSF55973">
    <property type="entry name" value="S-adenosylmethionine synthetase"/>
    <property type="match status" value="3"/>
</dbReference>
<dbReference type="PROSITE" id="PS00376">
    <property type="entry name" value="ADOMET_SYNTHASE_1"/>
    <property type="match status" value="1"/>
</dbReference>
<dbReference type="PROSITE" id="PS00377">
    <property type="entry name" value="ADOMET_SYNTHASE_2"/>
    <property type="match status" value="1"/>
</dbReference>
<gene>
    <name evidence="1" type="primary">metK</name>
    <name type="ordered locus">Sama_2760</name>
</gene>
<comment type="function">
    <text evidence="1">Catalyzes the formation of S-adenosylmethionine (AdoMet) from methionine and ATP. The overall synthetic reaction is composed of two sequential steps, AdoMet formation and the subsequent tripolyphosphate hydrolysis which occurs prior to release of AdoMet from the enzyme.</text>
</comment>
<comment type="catalytic activity">
    <reaction evidence="1">
        <text>L-methionine + ATP + H2O = S-adenosyl-L-methionine + phosphate + diphosphate</text>
        <dbReference type="Rhea" id="RHEA:21080"/>
        <dbReference type="ChEBI" id="CHEBI:15377"/>
        <dbReference type="ChEBI" id="CHEBI:30616"/>
        <dbReference type="ChEBI" id="CHEBI:33019"/>
        <dbReference type="ChEBI" id="CHEBI:43474"/>
        <dbReference type="ChEBI" id="CHEBI:57844"/>
        <dbReference type="ChEBI" id="CHEBI:59789"/>
        <dbReference type="EC" id="2.5.1.6"/>
    </reaction>
</comment>
<comment type="cofactor">
    <cofactor evidence="1">
        <name>Mg(2+)</name>
        <dbReference type="ChEBI" id="CHEBI:18420"/>
    </cofactor>
    <text evidence="1">Binds 2 divalent ions per subunit.</text>
</comment>
<comment type="cofactor">
    <cofactor evidence="1">
        <name>K(+)</name>
        <dbReference type="ChEBI" id="CHEBI:29103"/>
    </cofactor>
    <text evidence="1">Binds 1 potassium ion per subunit.</text>
</comment>
<comment type="pathway">
    <text evidence="1">Amino-acid biosynthesis; S-adenosyl-L-methionine biosynthesis; S-adenosyl-L-methionine from L-methionine: step 1/1.</text>
</comment>
<comment type="subunit">
    <text evidence="1">Homotetramer; dimer of dimers.</text>
</comment>
<comment type="subcellular location">
    <subcellularLocation>
        <location evidence="1">Cytoplasm</location>
    </subcellularLocation>
</comment>
<comment type="similarity">
    <text evidence="1">Belongs to the AdoMet synthase family.</text>
</comment>
<accession>A1S9A6</accession>
<organism>
    <name type="scientific">Shewanella amazonensis (strain ATCC BAA-1098 / SB2B)</name>
    <dbReference type="NCBI Taxonomy" id="326297"/>
    <lineage>
        <taxon>Bacteria</taxon>
        <taxon>Pseudomonadati</taxon>
        <taxon>Pseudomonadota</taxon>
        <taxon>Gammaproteobacteria</taxon>
        <taxon>Alteromonadales</taxon>
        <taxon>Shewanellaceae</taxon>
        <taxon>Shewanella</taxon>
    </lineage>
</organism>
<sequence length="383" mass="41438">MAKHLFTSESVSEGHPDKIADQISDAVLDAILEQDPKARVACETYVKTGMVMVGGEITTSAWVDIEELTRKTVREIGYVHSDMGFDADSCAVLSAIGKQSPDINQGVDRADPREQGAGDQGLMFGYASNETDVLMPAPITYAHALVKRQSEVRKDGTLSWLRPDAKSQVTFAYDEGKIVGIDAIVLSTQHCDSVSQSDLVEGVMETIIKPVVPAQWLNKDTKFFINPTGRFVIGGPMGDCGLTGRKIIVDTYGGMARHGGGAFSGKDPSKVDRSAAYAARYVAKNIVAAGLADRCEIQVSYAIGVAEPTSISIETFGTGKLPEDKLIALVRQHFDLRPYGLTEMLNLARPIYQATAAYGHFGRNEFPWEQTNKAEALRADSGL</sequence>
<name>METK_SHEAM</name>
<proteinExistence type="inferred from homology"/>
<keyword id="KW-0067">ATP-binding</keyword>
<keyword id="KW-0963">Cytoplasm</keyword>
<keyword id="KW-0460">Magnesium</keyword>
<keyword id="KW-0479">Metal-binding</keyword>
<keyword id="KW-0547">Nucleotide-binding</keyword>
<keyword id="KW-0554">One-carbon metabolism</keyword>
<keyword id="KW-0630">Potassium</keyword>
<keyword id="KW-1185">Reference proteome</keyword>
<keyword id="KW-0808">Transferase</keyword>
<evidence type="ECO:0000255" key="1">
    <source>
        <dbReference type="HAMAP-Rule" id="MF_00086"/>
    </source>
</evidence>
<protein>
    <recommendedName>
        <fullName evidence="1">S-adenosylmethionine synthase</fullName>
        <shortName evidence="1">AdoMet synthase</shortName>
        <ecNumber evidence="1">2.5.1.6</ecNumber>
    </recommendedName>
    <alternativeName>
        <fullName evidence="1">MAT</fullName>
    </alternativeName>
    <alternativeName>
        <fullName evidence="1">Methionine adenosyltransferase</fullName>
    </alternativeName>
</protein>
<feature type="chain" id="PRO_0000302974" description="S-adenosylmethionine synthase">
    <location>
        <begin position="1"/>
        <end position="383"/>
    </location>
</feature>
<feature type="region of interest" description="Flexible loop" evidence="1">
    <location>
        <begin position="99"/>
        <end position="109"/>
    </location>
</feature>
<feature type="binding site" description="in other chain" evidence="1">
    <location>
        <position position="15"/>
    </location>
    <ligand>
        <name>ATP</name>
        <dbReference type="ChEBI" id="CHEBI:30616"/>
        <note>ligand shared between two neighboring subunits</note>
    </ligand>
</feature>
<feature type="binding site" evidence="1">
    <location>
        <position position="17"/>
    </location>
    <ligand>
        <name>Mg(2+)</name>
        <dbReference type="ChEBI" id="CHEBI:18420"/>
    </ligand>
</feature>
<feature type="binding site" evidence="1">
    <location>
        <position position="43"/>
    </location>
    <ligand>
        <name>K(+)</name>
        <dbReference type="ChEBI" id="CHEBI:29103"/>
    </ligand>
</feature>
<feature type="binding site" description="in other chain" evidence="1">
    <location>
        <position position="56"/>
    </location>
    <ligand>
        <name>L-methionine</name>
        <dbReference type="ChEBI" id="CHEBI:57844"/>
        <note>ligand shared between two neighboring subunits</note>
    </ligand>
</feature>
<feature type="binding site" description="in other chain" evidence="1">
    <location>
        <position position="99"/>
    </location>
    <ligand>
        <name>L-methionine</name>
        <dbReference type="ChEBI" id="CHEBI:57844"/>
        <note>ligand shared between two neighboring subunits</note>
    </ligand>
</feature>
<feature type="binding site" description="in other chain" evidence="1">
    <location>
        <begin position="164"/>
        <end position="166"/>
    </location>
    <ligand>
        <name>ATP</name>
        <dbReference type="ChEBI" id="CHEBI:30616"/>
        <note>ligand shared between two neighboring subunits</note>
    </ligand>
</feature>
<feature type="binding site" description="in other chain" evidence="1">
    <location>
        <begin position="230"/>
        <end position="231"/>
    </location>
    <ligand>
        <name>ATP</name>
        <dbReference type="ChEBI" id="CHEBI:30616"/>
        <note>ligand shared between two neighboring subunits</note>
    </ligand>
</feature>
<feature type="binding site" evidence="1">
    <location>
        <position position="239"/>
    </location>
    <ligand>
        <name>ATP</name>
        <dbReference type="ChEBI" id="CHEBI:30616"/>
        <note>ligand shared between two neighboring subunits</note>
    </ligand>
</feature>
<feature type="binding site" evidence="1">
    <location>
        <position position="239"/>
    </location>
    <ligand>
        <name>L-methionine</name>
        <dbReference type="ChEBI" id="CHEBI:57844"/>
        <note>ligand shared between two neighboring subunits</note>
    </ligand>
</feature>
<feature type="binding site" description="in other chain" evidence="1">
    <location>
        <begin position="245"/>
        <end position="246"/>
    </location>
    <ligand>
        <name>ATP</name>
        <dbReference type="ChEBI" id="CHEBI:30616"/>
        <note>ligand shared between two neighboring subunits</note>
    </ligand>
</feature>
<feature type="binding site" evidence="1">
    <location>
        <position position="262"/>
    </location>
    <ligand>
        <name>ATP</name>
        <dbReference type="ChEBI" id="CHEBI:30616"/>
        <note>ligand shared between two neighboring subunits</note>
    </ligand>
</feature>
<feature type="binding site" evidence="1">
    <location>
        <position position="266"/>
    </location>
    <ligand>
        <name>ATP</name>
        <dbReference type="ChEBI" id="CHEBI:30616"/>
        <note>ligand shared between two neighboring subunits</note>
    </ligand>
</feature>
<feature type="binding site" description="in other chain" evidence="1">
    <location>
        <position position="270"/>
    </location>
    <ligand>
        <name>L-methionine</name>
        <dbReference type="ChEBI" id="CHEBI:57844"/>
        <note>ligand shared between two neighboring subunits</note>
    </ligand>
</feature>